<proteinExistence type="evidence at protein level"/>
<reference key="1">
    <citation type="journal article" date="2005" name="Gene">
        <title>Molecular cloning and characterization of a novel androgen repressible gene expressed in the prostate epithelium.</title>
        <authorList>
            <person name="Singh J."/>
            <person name="Young L."/>
            <person name="Handelsman D.J."/>
            <person name="Dong Q."/>
        </authorList>
    </citation>
    <scope>NUCLEOTIDE SEQUENCE [MRNA]</scope>
    <scope>INDUCTION</scope>
    <scope>TISSUE SPECIFICITY</scope>
</reference>
<reference key="2">
    <citation type="journal article" date="2005" name="Science">
        <title>The transcriptional landscape of the mammalian genome.</title>
        <authorList>
            <person name="Carninci P."/>
            <person name="Kasukawa T."/>
            <person name="Katayama S."/>
            <person name="Gough J."/>
            <person name="Frith M.C."/>
            <person name="Maeda N."/>
            <person name="Oyama R."/>
            <person name="Ravasi T."/>
            <person name="Lenhard B."/>
            <person name="Wells C."/>
            <person name="Kodzius R."/>
            <person name="Shimokawa K."/>
            <person name="Bajic V.B."/>
            <person name="Brenner S.E."/>
            <person name="Batalov S."/>
            <person name="Forrest A.R."/>
            <person name="Zavolan M."/>
            <person name="Davis M.J."/>
            <person name="Wilming L.G."/>
            <person name="Aidinis V."/>
            <person name="Allen J.E."/>
            <person name="Ambesi-Impiombato A."/>
            <person name="Apweiler R."/>
            <person name="Aturaliya R.N."/>
            <person name="Bailey T.L."/>
            <person name="Bansal M."/>
            <person name="Baxter L."/>
            <person name="Beisel K.W."/>
            <person name="Bersano T."/>
            <person name="Bono H."/>
            <person name="Chalk A.M."/>
            <person name="Chiu K.P."/>
            <person name="Choudhary V."/>
            <person name="Christoffels A."/>
            <person name="Clutterbuck D.R."/>
            <person name="Crowe M.L."/>
            <person name="Dalla E."/>
            <person name="Dalrymple B.P."/>
            <person name="de Bono B."/>
            <person name="Della Gatta G."/>
            <person name="di Bernardo D."/>
            <person name="Down T."/>
            <person name="Engstrom P."/>
            <person name="Fagiolini M."/>
            <person name="Faulkner G."/>
            <person name="Fletcher C.F."/>
            <person name="Fukushima T."/>
            <person name="Furuno M."/>
            <person name="Futaki S."/>
            <person name="Gariboldi M."/>
            <person name="Georgii-Hemming P."/>
            <person name="Gingeras T.R."/>
            <person name="Gojobori T."/>
            <person name="Green R.E."/>
            <person name="Gustincich S."/>
            <person name="Harbers M."/>
            <person name="Hayashi Y."/>
            <person name="Hensch T.K."/>
            <person name="Hirokawa N."/>
            <person name="Hill D."/>
            <person name="Huminiecki L."/>
            <person name="Iacono M."/>
            <person name="Ikeo K."/>
            <person name="Iwama A."/>
            <person name="Ishikawa T."/>
            <person name="Jakt M."/>
            <person name="Kanapin A."/>
            <person name="Katoh M."/>
            <person name="Kawasawa Y."/>
            <person name="Kelso J."/>
            <person name="Kitamura H."/>
            <person name="Kitano H."/>
            <person name="Kollias G."/>
            <person name="Krishnan S.P."/>
            <person name="Kruger A."/>
            <person name="Kummerfeld S.K."/>
            <person name="Kurochkin I.V."/>
            <person name="Lareau L.F."/>
            <person name="Lazarevic D."/>
            <person name="Lipovich L."/>
            <person name="Liu J."/>
            <person name="Liuni S."/>
            <person name="McWilliam S."/>
            <person name="Madan Babu M."/>
            <person name="Madera M."/>
            <person name="Marchionni L."/>
            <person name="Matsuda H."/>
            <person name="Matsuzawa S."/>
            <person name="Miki H."/>
            <person name="Mignone F."/>
            <person name="Miyake S."/>
            <person name="Morris K."/>
            <person name="Mottagui-Tabar S."/>
            <person name="Mulder N."/>
            <person name="Nakano N."/>
            <person name="Nakauchi H."/>
            <person name="Ng P."/>
            <person name="Nilsson R."/>
            <person name="Nishiguchi S."/>
            <person name="Nishikawa S."/>
            <person name="Nori F."/>
            <person name="Ohara O."/>
            <person name="Okazaki Y."/>
            <person name="Orlando V."/>
            <person name="Pang K.C."/>
            <person name="Pavan W.J."/>
            <person name="Pavesi G."/>
            <person name="Pesole G."/>
            <person name="Petrovsky N."/>
            <person name="Piazza S."/>
            <person name="Reed J."/>
            <person name="Reid J.F."/>
            <person name="Ring B.Z."/>
            <person name="Ringwald M."/>
            <person name="Rost B."/>
            <person name="Ruan Y."/>
            <person name="Salzberg S.L."/>
            <person name="Sandelin A."/>
            <person name="Schneider C."/>
            <person name="Schoenbach C."/>
            <person name="Sekiguchi K."/>
            <person name="Semple C.A."/>
            <person name="Seno S."/>
            <person name="Sessa L."/>
            <person name="Sheng Y."/>
            <person name="Shibata Y."/>
            <person name="Shimada H."/>
            <person name="Shimada K."/>
            <person name="Silva D."/>
            <person name="Sinclair B."/>
            <person name="Sperling S."/>
            <person name="Stupka E."/>
            <person name="Sugiura K."/>
            <person name="Sultana R."/>
            <person name="Takenaka Y."/>
            <person name="Taki K."/>
            <person name="Tammoja K."/>
            <person name="Tan S.L."/>
            <person name="Tang S."/>
            <person name="Taylor M.S."/>
            <person name="Tegner J."/>
            <person name="Teichmann S.A."/>
            <person name="Ueda H.R."/>
            <person name="van Nimwegen E."/>
            <person name="Verardo R."/>
            <person name="Wei C.L."/>
            <person name="Yagi K."/>
            <person name="Yamanishi H."/>
            <person name="Zabarovsky E."/>
            <person name="Zhu S."/>
            <person name="Zimmer A."/>
            <person name="Hide W."/>
            <person name="Bult C."/>
            <person name="Grimmond S.M."/>
            <person name="Teasdale R.D."/>
            <person name="Liu E.T."/>
            <person name="Brusic V."/>
            <person name="Quackenbush J."/>
            <person name="Wahlestedt C."/>
            <person name="Mattick J.S."/>
            <person name="Hume D.A."/>
            <person name="Kai C."/>
            <person name="Sasaki D."/>
            <person name="Tomaru Y."/>
            <person name="Fukuda S."/>
            <person name="Kanamori-Katayama M."/>
            <person name="Suzuki M."/>
            <person name="Aoki J."/>
            <person name="Arakawa T."/>
            <person name="Iida J."/>
            <person name="Imamura K."/>
            <person name="Itoh M."/>
            <person name="Kato T."/>
            <person name="Kawaji H."/>
            <person name="Kawagashira N."/>
            <person name="Kawashima T."/>
            <person name="Kojima M."/>
            <person name="Kondo S."/>
            <person name="Konno H."/>
            <person name="Nakano K."/>
            <person name="Ninomiya N."/>
            <person name="Nishio T."/>
            <person name="Okada M."/>
            <person name="Plessy C."/>
            <person name="Shibata K."/>
            <person name="Shiraki T."/>
            <person name="Suzuki S."/>
            <person name="Tagami M."/>
            <person name="Waki K."/>
            <person name="Watahiki A."/>
            <person name="Okamura-Oho Y."/>
            <person name="Suzuki H."/>
            <person name="Kawai J."/>
            <person name="Hayashizaki Y."/>
        </authorList>
    </citation>
    <scope>NUCLEOTIDE SEQUENCE [LARGE SCALE MRNA]</scope>
    <source>
        <strain>C57BL/6J</strain>
        <tissue>Embryo</tissue>
        <tissue>Tongue</tissue>
    </source>
</reference>
<reference key="3">
    <citation type="journal article" date="2004" name="Genome Res.">
        <title>The status, quality, and expansion of the NIH full-length cDNA project: the Mammalian Gene Collection (MGC).</title>
        <authorList>
            <consortium name="The MGC Project Team"/>
        </authorList>
    </citation>
    <scope>NUCLEOTIDE SEQUENCE [LARGE SCALE MRNA]</scope>
    <source>
        <strain>FVB/N</strain>
        <tissue>Colon</tissue>
    </source>
</reference>
<reference key="4">
    <citation type="journal article" date="2015" name="Proc. Natl. Acad. Sci. U.S.A.">
        <title>Elevation of 20-carbon long chain bases due to a mutation in serine palmitoyltransferase small subunit b results in neurodegeneration.</title>
        <authorList>
            <person name="Zhao L."/>
            <person name="Spassieva S."/>
            <person name="Gable K."/>
            <person name="Gupta S.D."/>
            <person name="Shi L.Y."/>
            <person name="Wang J."/>
            <person name="Bielawski J."/>
            <person name="Hicks W.L."/>
            <person name="Krebs M.P."/>
            <person name="Naggert J."/>
            <person name="Hannun Y.A."/>
            <person name="Dunn T.M."/>
            <person name="Nishina P.M."/>
        </authorList>
    </citation>
    <scope>FUNCTION</scope>
    <scope>MUTAGENESIS OF HIS-56</scope>
    <scope>PATHWAY</scope>
</reference>
<feature type="chain" id="PRO_0000239720" description="Serine palmitoyltransferase small subunit B">
    <location>
        <begin position="1"/>
        <end position="76"/>
    </location>
</feature>
<feature type="topological domain" description="Cytoplasmic" evidence="3">
    <location>
        <begin position="1"/>
        <end position="11"/>
    </location>
</feature>
<feature type="transmembrane region" description="Helical" evidence="3">
    <location>
        <begin position="12"/>
        <end position="29"/>
    </location>
</feature>
<feature type="topological domain" description="Lumenal" evidence="3">
    <location>
        <begin position="30"/>
        <end position="36"/>
    </location>
</feature>
<feature type="transmembrane region" description="Helical" evidence="3">
    <location>
        <begin position="37"/>
        <end position="57"/>
    </location>
</feature>
<feature type="topological domain" description="Cytoplasmic" evidence="3">
    <location>
        <begin position="58"/>
        <end position="76"/>
    </location>
</feature>
<feature type="mutagenesis site" description="Mutant mice develop early onset ataxia, exhibit reduced body weight and usually die around 10 weeks after birth. Increases SPT affininity toward C18-CoA substrate by twofold and elevates C20 long chain base production in the brain and eye. Produces neurodegenerative effects such as aberrant membrane structures, accumulation of ubiquitinated protein on membranes and axon degeneration." evidence="5">
    <original>H</original>
    <variation>L</variation>
    <location>
        <position position="56"/>
    </location>
</feature>
<sequence length="76" mass="9108">MDFKRVKEYFAWLYYQYQIITCCAVMEPWEQSMLNTIILTIVAMVVYTAYVFIPIHIRLAWEFFSKICGYDSSISN</sequence>
<dbReference type="EMBL" id="AF365876">
    <property type="protein sequence ID" value="AAK53702.1"/>
    <property type="molecule type" value="mRNA"/>
</dbReference>
<dbReference type="EMBL" id="AK010117">
    <property type="protein sequence ID" value="BAC25280.1"/>
    <property type="molecule type" value="mRNA"/>
</dbReference>
<dbReference type="EMBL" id="AK009973">
    <property type="protein sequence ID" value="BAC25279.1"/>
    <property type="molecule type" value="mRNA"/>
</dbReference>
<dbReference type="EMBL" id="AK004017">
    <property type="protein sequence ID" value="BAC25062.1"/>
    <property type="molecule type" value="mRNA"/>
</dbReference>
<dbReference type="EMBL" id="BC022628">
    <property type="protein sequence ID" value="AAH22628.1"/>
    <property type="molecule type" value="mRNA"/>
</dbReference>
<dbReference type="CCDS" id="CCDS38453.1"/>
<dbReference type="RefSeq" id="NP_001157682.1">
    <property type="nucleotide sequence ID" value="NM_001164210.2"/>
</dbReference>
<dbReference type="RefSeq" id="NP_598436.1">
    <property type="nucleotide sequence ID" value="NM_133675.3"/>
</dbReference>
<dbReference type="SMR" id="Q925E8"/>
<dbReference type="FunCoup" id="Q925E8">
    <property type="interactions" value="167"/>
</dbReference>
<dbReference type="STRING" id="10090.ENSMUSP00000062794"/>
<dbReference type="PhosphoSitePlus" id="Q925E8"/>
<dbReference type="PaxDb" id="10090-ENSMUSP00000131241"/>
<dbReference type="ProteomicsDB" id="257062"/>
<dbReference type="DNASU" id="66183"/>
<dbReference type="Ensembl" id="ENSMUST00000051239.13">
    <property type="protein sequence ID" value="ENSMUSP00000062794.8"/>
    <property type="gene ID" value="ENSMUSG00000043461.14"/>
</dbReference>
<dbReference type="Ensembl" id="ENSMUST00000171529.4">
    <property type="protein sequence ID" value="ENSMUSP00000131241.2"/>
    <property type="gene ID" value="ENSMUSG00000043461.14"/>
</dbReference>
<dbReference type="GeneID" id="66183"/>
<dbReference type="KEGG" id="mmu:66183"/>
<dbReference type="UCSC" id="uc008pmn.3">
    <property type="organism name" value="mouse"/>
</dbReference>
<dbReference type="AGR" id="MGI:1913433"/>
<dbReference type="CTD" id="165679"/>
<dbReference type="MGI" id="MGI:1913433">
    <property type="gene designation" value="Sptssb"/>
</dbReference>
<dbReference type="VEuPathDB" id="HostDB:ENSMUSG00000043461"/>
<dbReference type="eggNOG" id="ENOG502S4Q9">
    <property type="taxonomic scope" value="Eukaryota"/>
</dbReference>
<dbReference type="GeneTree" id="ENSGT00390000002766"/>
<dbReference type="HOGENOM" id="CLU_187811_0_0_1"/>
<dbReference type="InParanoid" id="Q925E8"/>
<dbReference type="OMA" id="WEFFSEI"/>
<dbReference type="OrthoDB" id="202672at2759"/>
<dbReference type="PhylomeDB" id="Q925E8"/>
<dbReference type="TreeFam" id="TF328418"/>
<dbReference type="Reactome" id="R-MMU-1660661">
    <property type="pathway name" value="Sphingolipid de novo biosynthesis"/>
</dbReference>
<dbReference type="UniPathway" id="UPA00222"/>
<dbReference type="BioGRID-ORCS" id="66183">
    <property type="hits" value="0 hits in 78 CRISPR screens"/>
</dbReference>
<dbReference type="PRO" id="PR:Q925E8"/>
<dbReference type="Proteomes" id="UP000000589">
    <property type="component" value="Chromosome 3"/>
</dbReference>
<dbReference type="RNAct" id="Q925E8">
    <property type="molecule type" value="protein"/>
</dbReference>
<dbReference type="Bgee" id="ENSMUSG00000043461">
    <property type="expression patterns" value="Expressed in urinary bladder urothelium and 103 other cell types or tissues"/>
</dbReference>
<dbReference type="GO" id="GO:0005789">
    <property type="term" value="C:endoplasmic reticulum membrane"/>
    <property type="evidence" value="ECO:0007669"/>
    <property type="project" value="UniProtKB-SubCell"/>
</dbReference>
<dbReference type="GO" id="GO:0017059">
    <property type="term" value="C:serine palmitoyltransferase complex"/>
    <property type="evidence" value="ECO:0000314"/>
    <property type="project" value="MGI"/>
</dbReference>
<dbReference type="GO" id="GO:0004758">
    <property type="term" value="F:serine C-palmitoyltransferase activity"/>
    <property type="evidence" value="ECO:0007669"/>
    <property type="project" value="Ensembl"/>
</dbReference>
<dbReference type="GO" id="GO:0046513">
    <property type="term" value="P:ceramide biosynthetic process"/>
    <property type="evidence" value="ECO:0000315"/>
    <property type="project" value="MGI"/>
</dbReference>
<dbReference type="GO" id="GO:0007029">
    <property type="term" value="P:endoplasmic reticulum organization"/>
    <property type="evidence" value="ECO:0000315"/>
    <property type="project" value="MGI"/>
</dbReference>
<dbReference type="GO" id="GO:0030148">
    <property type="term" value="P:sphingolipid biosynthetic process"/>
    <property type="evidence" value="ECO:0000315"/>
    <property type="project" value="MGI"/>
</dbReference>
<dbReference type="GO" id="GO:0046512">
    <property type="term" value="P:sphingosine biosynthetic process"/>
    <property type="evidence" value="ECO:0007669"/>
    <property type="project" value="Ensembl"/>
</dbReference>
<dbReference type="InterPro" id="IPR024512">
    <property type="entry name" value="Ser_palmitoyltrfase_ssu-like"/>
</dbReference>
<dbReference type="PANTHER" id="PTHR28612">
    <property type="entry name" value="SERINE PALMITOYLTRANSFERASE SMALL SUBUNIT B"/>
    <property type="match status" value="1"/>
</dbReference>
<dbReference type="PANTHER" id="PTHR28612:SF1">
    <property type="entry name" value="SERINE PALMITOYLTRANSFERASE SMALL SUBUNIT B"/>
    <property type="match status" value="1"/>
</dbReference>
<dbReference type="Pfam" id="PF11779">
    <property type="entry name" value="SPT_ssu-like"/>
    <property type="match status" value="1"/>
</dbReference>
<name>SPTSB_MOUSE</name>
<protein>
    <recommendedName>
        <fullName>Serine palmitoyltransferase small subunit B</fullName>
    </recommendedName>
    <alternativeName>
        <fullName>Protein ADMP</fullName>
    </alternativeName>
    <alternativeName>
        <fullName>Small subunit of serine palmitoyltransferase B</fullName>
        <shortName>ssSPTb</shortName>
    </alternativeName>
</protein>
<comment type="function">
    <text evidence="1">Component of the serine palmitoyltransferase multisubunit enzyme (SPT) that catalyzes the initial and rate-limiting step in sphingolipid biosynthesis by condensing L-serine and activated acyl-CoA (most commonly palmitoyl-CoA) to form long-chain bases. The SPT complex is composed of SPTLC1, SPTLC2 or SPTLC3 and SPTSSA or SPTSSB. Within this complex, the heterodimer consisting of SPTLC1 and SPTLC2/SPTLC3 forms the catalytic core. Within the SPT complex, SPTSSB stimulates the catalytic activity and plays a role in substrate specificity. SPT complexes with this subunit showing a preference for longer acyl-CoAs. The SPTLC1-SPTLC2-SPTSSB complex shows a strong preference for C18-CoA substrate, while the SPTLC1-SPTLC3-SPTSSB isozyme displays an ability to use a broader range of acyl-CoAs, without apparent preference.</text>
</comment>
<comment type="pathway">
    <text evidence="5">Lipid metabolism; sphingolipid metabolism.</text>
</comment>
<comment type="subunit">
    <text evidence="1 2">Component of the serine palmitoyltransferase (SPT) complex, which is composed of SPTLC1, SPTLC2 or SPTLC3 and SPTSSA or SPTSSB. The heterodimer consisting of SPTLC1 and SPTLC2/SPTLC3 forms the catalytic core of the enzyme, while SPTSSA or SPTSSB subunits determine substrate specificity (By similarity). SPT also interacts with ORMDL proteins, especially ORMDL3, which negatively regulate SPT activity in the presence of ceramides (By similarity).</text>
</comment>
<comment type="subcellular location">
    <subcellularLocation>
        <location evidence="6">Endoplasmic reticulum membrane</location>
        <topology evidence="6">Multi-pass membrane protein</topology>
    </subcellularLocation>
</comment>
<comment type="tissue specificity">
    <text evidence="4">Expression is strong in hypogonadal (hpg) mouse prostate, weak in mature castrated mouse prostate and absent in normal intact or androgen-replaced hpg mouse prostates.</text>
</comment>
<comment type="induction">
    <text evidence="4">While expression is androgen independent in the hpg mouse prostate, it appears to be androgen-dependent in the kidney and brain of normal intact mouse suggesting tissue specific regulation by androgens.</text>
</comment>
<comment type="similarity">
    <text evidence="6">Belongs to the SPTSS family. SPTSSB subfamily.</text>
</comment>
<gene>
    <name type="primary">Sptssb</name>
    <name type="synonym">Admp</name>
    <name type="synonym">Sssptb</name>
</gene>
<accession>Q925E8</accession>
<evidence type="ECO:0000250" key="1">
    <source>
        <dbReference type="UniProtKB" id="Q8NFR3"/>
    </source>
</evidence>
<evidence type="ECO:0000250" key="2">
    <source>
        <dbReference type="UniProtKB" id="Q969W0"/>
    </source>
</evidence>
<evidence type="ECO:0000255" key="3"/>
<evidence type="ECO:0000269" key="4">
    <source>
    </source>
</evidence>
<evidence type="ECO:0000269" key="5">
    <source>
    </source>
</evidence>
<evidence type="ECO:0000305" key="6"/>
<organism>
    <name type="scientific">Mus musculus</name>
    <name type="common">Mouse</name>
    <dbReference type="NCBI Taxonomy" id="10090"/>
    <lineage>
        <taxon>Eukaryota</taxon>
        <taxon>Metazoa</taxon>
        <taxon>Chordata</taxon>
        <taxon>Craniata</taxon>
        <taxon>Vertebrata</taxon>
        <taxon>Euteleostomi</taxon>
        <taxon>Mammalia</taxon>
        <taxon>Eutheria</taxon>
        <taxon>Euarchontoglires</taxon>
        <taxon>Glires</taxon>
        <taxon>Rodentia</taxon>
        <taxon>Myomorpha</taxon>
        <taxon>Muroidea</taxon>
        <taxon>Muridae</taxon>
        <taxon>Murinae</taxon>
        <taxon>Mus</taxon>
        <taxon>Mus</taxon>
    </lineage>
</organism>
<keyword id="KW-0256">Endoplasmic reticulum</keyword>
<keyword id="KW-0443">Lipid metabolism</keyword>
<keyword id="KW-0472">Membrane</keyword>
<keyword id="KW-1185">Reference proteome</keyword>
<keyword id="KW-0746">Sphingolipid metabolism</keyword>
<keyword id="KW-0812">Transmembrane</keyword>
<keyword id="KW-1133">Transmembrane helix</keyword>